<reference key="1">
    <citation type="journal article" date="2008" name="Appl. Environ. Microbiol.">
        <title>Genome of the epsilonproteobacterial chemolithoautotroph Sulfurimonas denitrificans.</title>
        <authorList>
            <person name="Sievert S.M."/>
            <person name="Scott K.M."/>
            <person name="Klotz M.G."/>
            <person name="Chain P.S.G."/>
            <person name="Hauser L.J."/>
            <person name="Hemp J."/>
            <person name="Huegler M."/>
            <person name="Land M."/>
            <person name="Lapidus A."/>
            <person name="Larimer F.W."/>
            <person name="Lucas S."/>
            <person name="Malfatti S.A."/>
            <person name="Meyer F."/>
            <person name="Paulsen I.T."/>
            <person name="Ren Q."/>
            <person name="Simon J."/>
            <person name="Bailey K."/>
            <person name="Diaz E."/>
            <person name="Fitzpatrick K.A."/>
            <person name="Glover B."/>
            <person name="Gwatney N."/>
            <person name="Korajkic A."/>
            <person name="Long A."/>
            <person name="Mobberley J.M."/>
            <person name="Pantry S.N."/>
            <person name="Pazder G."/>
            <person name="Peterson S."/>
            <person name="Quintanilla J.D."/>
            <person name="Sprinkle R."/>
            <person name="Stephens J."/>
            <person name="Thomas P."/>
            <person name="Vaughn R."/>
            <person name="Weber M.J."/>
            <person name="Wooten L.L."/>
        </authorList>
    </citation>
    <scope>NUCLEOTIDE SEQUENCE [LARGE SCALE GENOMIC DNA]</scope>
    <source>
        <strain>ATCC 33889 / DSM 1251</strain>
    </source>
</reference>
<keyword id="KW-0067">ATP-binding</keyword>
<keyword id="KW-0436">Ligase</keyword>
<keyword id="KW-0479">Metal-binding</keyword>
<keyword id="KW-0547">Nucleotide-binding</keyword>
<keyword id="KW-0671">Queuosine biosynthesis</keyword>
<keyword id="KW-1185">Reference proteome</keyword>
<keyword id="KW-0862">Zinc</keyword>
<evidence type="ECO:0000255" key="1">
    <source>
        <dbReference type="HAMAP-Rule" id="MF_01633"/>
    </source>
</evidence>
<dbReference type="EC" id="6.3.4.20" evidence="1"/>
<dbReference type="EMBL" id="CP000153">
    <property type="protein sequence ID" value="ABB44348.1"/>
    <property type="molecule type" value="Genomic_DNA"/>
</dbReference>
<dbReference type="RefSeq" id="WP_011372700.1">
    <property type="nucleotide sequence ID" value="NC_007575.1"/>
</dbReference>
<dbReference type="SMR" id="Q30RN3"/>
<dbReference type="STRING" id="326298.Suden_1070"/>
<dbReference type="KEGG" id="tdn:Suden_1070"/>
<dbReference type="eggNOG" id="COG0603">
    <property type="taxonomic scope" value="Bacteria"/>
</dbReference>
<dbReference type="HOGENOM" id="CLU_081854_1_0_7"/>
<dbReference type="OrthoDB" id="9789567at2"/>
<dbReference type="UniPathway" id="UPA00391"/>
<dbReference type="Proteomes" id="UP000002714">
    <property type="component" value="Chromosome"/>
</dbReference>
<dbReference type="GO" id="GO:0005524">
    <property type="term" value="F:ATP binding"/>
    <property type="evidence" value="ECO:0007669"/>
    <property type="project" value="UniProtKB-UniRule"/>
</dbReference>
<dbReference type="GO" id="GO:0016879">
    <property type="term" value="F:ligase activity, forming carbon-nitrogen bonds"/>
    <property type="evidence" value="ECO:0007669"/>
    <property type="project" value="UniProtKB-UniRule"/>
</dbReference>
<dbReference type="GO" id="GO:0008270">
    <property type="term" value="F:zinc ion binding"/>
    <property type="evidence" value="ECO:0007669"/>
    <property type="project" value="UniProtKB-UniRule"/>
</dbReference>
<dbReference type="GO" id="GO:0008616">
    <property type="term" value="P:queuosine biosynthetic process"/>
    <property type="evidence" value="ECO:0007669"/>
    <property type="project" value="UniProtKB-UniRule"/>
</dbReference>
<dbReference type="CDD" id="cd01995">
    <property type="entry name" value="QueC-like"/>
    <property type="match status" value="1"/>
</dbReference>
<dbReference type="Gene3D" id="3.40.50.620">
    <property type="entry name" value="HUPs"/>
    <property type="match status" value="1"/>
</dbReference>
<dbReference type="HAMAP" id="MF_01633">
    <property type="entry name" value="QueC"/>
    <property type="match status" value="1"/>
</dbReference>
<dbReference type="InterPro" id="IPR018317">
    <property type="entry name" value="QueC"/>
</dbReference>
<dbReference type="InterPro" id="IPR014729">
    <property type="entry name" value="Rossmann-like_a/b/a_fold"/>
</dbReference>
<dbReference type="NCBIfam" id="TIGR00364">
    <property type="entry name" value="7-cyano-7-deazaguanine synthase QueC"/>
    <property type="match status" value="1"/>
</dbReference>
<dbReference type="PANTHER" id="PTHR42914">
    <property type="entry name" value="7-CYANO-7-DEAZAGUANINE SYNTHASE"/>
    <property type="match status" value="1"/>
</dbReference>
<dbReference type="PANTHER" id="PTHR42914:SF1">
    <property type="entry name" value="7-CYANO-7-DEAZAGUANINE SYNTHASE"/>
    <property type="match status" value="1"/>
</dbReference>
<dbReference type="Pfam" id="PF06508">
    <property type="entry name" value="QueC"/>
    <property type="match status" value="1"/>
</dbReference>
<dbReference type="PIRSF" id="PIRSF006293">
    <property type="entry name" value="ExsB"/>
    <property type="match status" value="1"/>
</dbReference>
<dbReference type="SUPFAM" id="SSF52402">
    <property type="entry name" value="Adenine nucleotide alpha hydrolases-like"/>
    <property type="match status" value="1"/>
</dbReference>
<proteinExistence type="inferred from homology"/>
<organism>
    <name type="scientific">Sulfurimonas denitrificans (strain ATCC 33889 / DSM 1251)</name>
    <name type="common">Thiomicrospira denitrificans (strain ATCC 33889 / DSM 1251)</name>
    <dbReference type="NCBI Taxonomy" id="326298"/>
    <lineage>
        <taxon>Bacteria</taxon>
        <taxon>Pseudomonadati</taxon>
        <taxon>Campylobacterota</taxon>
        <taxon>Epsilonproteobacteria</taxon>
        <taxon>Campylobacterales</taxon>
        <taxon>Sulfurimonadaceae</taxon>
        <taxon>Sulfurimonas</taxon>
    </lineage>
</organism>
<accession>Q30RN3</accession>
<sequence>MNLKNKKAICIMSGGMDSTLGAYMVKEMGYEIVALHFNYAQRTEAKELFCFKKICEALNVSNSYVLDLDFFSKIGASALTDKSIDIPINGLEEGVPITYVPFRNGIFLSIAAALAEKEEAVLIAIGVVQEDSSGYPDCKDSFITSMEQSINLGTKDETKIKIYMPLVHLSKSQIVEHALRLNVPLELTWSCYKDEEAACGVCDSCRLRLNGFRLANAKDPIEYM</sequence>
<name>QUEC_SULDN</name>
<gene>
    <name evidence="1" type="primary">queC</name>
    <name type="ordered locus">Suden_1070</name>
</gene>
<comment type="function">
    <text evidence="1">Catalyzes the ATP-dependent conversion of 7-carboxy-7-deazaguanine (CDG) to 7-cyano-7-deazaguanine (preQ(0)).</text>
</comment>
<comment type="catalytic activity">
    <reaction evidence="1">
        <text>7-carboxy-7-deazaguanine + NH4(+) + ATP = 7-cyano-7-deazaguanine + ADP + phosphate + H2O + H(+)</text>
        <dbReference type="Rhea" id="RHEA:27982"/>
        <dbReference type="ChEBI" id="CHEBI:15377"/>
        <dbReference type="ChEBI" id="CHEBI:15378"/>
        <dbReference type="ChEBI" id="CHEBI:28938"/>
        <dbReference type="ChEBI" id="CHEBI:30616"/>
        <dbReference type="ChEBI" id="CHEBI:43474"/>
        <dbReference type="ChEBI" id="CHEBI:45075"/>
        <dbReference type="ChEBI" id="CHEBI:61036"/>
        <dbReference type="ChEBI" id="CHEBI:456216"/>
        <dbReference type="EC" id="6.3.4.20"/>
    </reaction>
</comment>
<comment type="cofactor">
    <cofactor evidence="1">
        <name>Zn(2+)</name>
        <dbReference type="ChEBI" id="CHEBI:29105"/>
    </cofactor>
    <text evidence="1">Binds 1 zinc ion per subunit.</text>
</comment>
<comment type="pathway">
    <text evidence="1">Purine metabolism; 7-cyano-7-deazaguanine biosynthesis.</text>
</comment>
<comment type="similarity">
    <text evidence="1">Belongs to the QueC family.</text>
</comment>
<protein>
    <recommendedName>
        <fullName evidence="1">7-cyano-7-deazaguanine synthase</fullName>
        <ecNumber evidence="1">6.3.4.20</ecNumber>
    </recommendedName>
    <alternativeName>
        <fullName evidence="1">7-cyano-7-carbaguanine synthase</fullName>
    </alternativeName>
    <alternativeName>
        <fullName evidence="1">PreQ(0) synthase</fullName>
    </alternativeName>
    <alternativeName>
        <fullName evidence="1">Queuosine biosynthesis protein QueC</fullName>
    </alternativeName>
</protein>
<feature type="chain" id="PRO_0000246954" description="7-cyano-7-deazaguanine synthase">
    <location>
        <begin position="1"/>
        <end position="224"/>
    </location>
</feature>
<feature type="binding site" evidence="1">
    <location>
        <begin position="12"/>
        <end position="22"/>
    </location>
    <ligand>
        <name>ATP</name>
        <dbReference type="ChEBI" id="CHEBI:30616"/>
    </ligand>
</feature>
<feature type="binding site" evidence="1">
    <location>
        <position position="191"/>
    </location>
    <ligand>
        <name>Zn(2+)</name>
        <dbReference type="ChEBI" id="CHEBI:29105"/>
    </ligand>
</feature>
<feature type="binding site" evidence="1">
    <location>
        <position position="199"/>
    </location>
    <ligand>
        <name>Zn(2+)</name>
        <dbReference type="ChEBI" id="CHEBI:29105"/>
    </ligand>
</feature>
<feature type="binding site" evidence="1">
    <location>
        <position position="202"/>
    </location>
    <ligand>
        <name>Zn(2+)</name>
        <dbReference type="ChEBI" id="CHEBI:29105"/>
    </ligand>
</feature>
<feature type="binding site" evidence="1">
    <location>
        <position position="205"/>
    </location>
    <ligand>
        <name>Zn(2+)</name>
        <dbReference type="ChEBI" id="CHEBI:29105"/>
    </ligand>
</feature>